<name>ISPG_CORJK</name>
<gene>
    <name evidence="1" type="primary">ispG</name>
    <name type="ordered locus">jk1165</name>
</gene>
<reference key="1">
    <citation type="journal article" date="2005" name="J. Bacteriol.">
        <title>Complete genome sequence and analysis of the multiresistant nosocomial pathogen Corynebacterium jeikeium K411, a lipid-requiring bacterium of the human skin flora.</title>
        <authorList>
            <person name="Tauch A."/>
            <person name="Kaiser O."/>
            <person name="Hain T."/>
            <person name="Goesmann A."/>
            <person name="Weisshaar B."/>
            <person name="Albersmeier A."/>
            <person name="Bekel T."/>
            <person name="Bischoff N."/>
            <person name="Brune I."/>
            <person name="Chakraborty T."/>
            <person name="Kalinowski J."/>
            <person name="Meyer F."/>
            <person name="Rupp O."/>
            <person name="Schneiker S."/>
            <person name="Viehoever P."/>
            <person name="Puehler A."/>
        </authorList>
    </citation>
    <scope>NUCLEOTIDE SEQUENCE [LARGE SCALE GENOMIC DNA]</scope>
    <source>
        <strain>K411</strain>
    </source>
</reference>
<organism>
    <name type="scientific">Corynebacterium jeikeium (strain K411)</name>
    <dbReference type="NCBI Taxonomy" id="306537"/>
    <lineage>
        <taxon>Bacteria</taxon>
        <taxon>Bacillati</taxon>
        <taxon>Actinomycetota</taxon>
        <taxon>Actinomycetes</taxon>
        <taxon>Mycobacteriales</taxon>
        <taxon>Corynebacteriaceae</taxon>
        <taxon>Corynebacterium</taxon>
    </lineage>
</organism>
<keyword id="KW-0004">4Fe-4S</keyword>
<keyword id="KW-0408">Iron</keyword>
<keyword id="KW-0411">Iron-sulfur</keyword>
<keyword id="KW-0414">Isoprene biosynthesis</keyword>
<keyword id="KW-0479">Metal-binding</keyword>
<keyword id="KW-0560">Oxidoreductase</keyword>
<keyword id="KW-1185">Reference proteome</keyword>
<protein>
    <recommendedName>
        <fullName evidence="1">4-hydroxy-3-methylbut-2-en-1-yl diphosphate synthase (flavodoxin)</fullName>
        <ecNumber evidence="1">1.17.7.3</ecNumber>
    </recommendedName>
    <alternativeName>
        <fullName evidence="1">1-hydroxy-2-methyl-2-(E)-butenyl 4-diphosphate synthase</fullName>
    </alternativeName>
</protein>
<evidence type="ECO:0000255" key="1">
    <source>
        <dbReference type="HAMAP-Rule" id="MF_00159"/>
    </source>
</evidence>
<sequence>MSGISLGIPDGPPPVLAPRRKTRQLMVGGVGVGSDHPISVQSMTTTKTHDVNATLQQIAQLTASGCDIVRVACPKTVDAEALPAIAAKSPIPVIADIHFQPKYIFSAIDAGCAAVRVNPGNIKEFDGRVKEVAKAAGDAGIPIRIGVNAGSLDKRIMEKYGKATPEALVESALWEASLFEEHGYGDIAISVKHNDPVVMVEAYRQLAAQSDYPLHLGVTEAGPAFQGTIKSSVAFGALLAEGIGDTIRVSLSADPVEEIKVGDQILQSLNLRPRKLEIVSCPSCGRAQVDVYKLADEVTAGLEGMEFPLRVAVMGCVVNGPGEARDADLGVASGNGKGQIFVKGEVIKTVPEDQIVETLIEEAMRIAEEEGLEAVEGQKAEVRVTK</sequence>
<proteinExistence type="inferred from homology"/>
<dbReference type="EC" id="1.17.7.3" evidence="1"/>
<dbReference type="EMBL" id="CR931997">
    <property type="protein sequence ID" value="CAI37329.1"/>
    <property type="molecule type" value="Genomic_DNA"/>
</dbReference>
<dbReference type="RefSeq" id="WP_011273699.1">
    <property type="nucleotide sequence ID" value="NC_007164.1"/>
</dbReference>
<dbReference type="SMR" id="Q4JV28"/>
<dbReference type="STRING" id="306537.jk1165"/>
<dbReference type="KEGG" id="cjk:jk1165"/>
<dbReference type="PATRIC" id="fig|306537.10.peg.1179"/>
<dbReference type="eggNOG" id="COG0821">
    <property type="taxonomic scope" value="Bacteria"/>
</dbReference>
<dbReference type="HOGENOM" id="CLU_042258_0_0_11"/>
<dbReference type="OrthoDB" id="9803214at2"/>
<dbReference type="UniPathway" id="UPA00056">
    <property type="reaction ID" value="UER00096"/>
</dbReference>
<dbReference type="Proteomes" id="UP000000545">
    <property type="component" value="Chromosome"/>
</dbReference>
<dbReference type="GO" id="GO:0051539">
    <property type="term" value="F:4 iron, 4 sulfur cluster binding"/>
    <property type="evidence" value="ECO:0007669"/>
    <property type="project" value="UniProtKB-UniRule"/>
</dbReference>
<dbReference type="GO" id="GO:0046429">
    <property type="term" value="F:4-hydroxy-3-methylbut-2-en-1-yl diphosphate synthase activity (ferredoxin)"/>
    <property type="evidence" value="ECO:0007669"/>
    <property type="project" value="UniProtKB-UniRule"/>
</dbReference>
<dbReference type="GO" id="GO:0141197">
    <property type="term" value="F:4-hydroxy-3-methylbut-2-enyl-diphosphate synthase activity (flavodoxin)"/>
    <property type="evidence" value="ECO:0007669"/>
    <property type="project" value="UniProtKB-EC"/>
</dbReference>
<dbReference type="GO" id="GO:0005506">
    <property type="term" value="F:iron ion binding"/>
    <property type="evidence" value="ECO:0007669"/>
    <property type="project" value="InterPro"/>
</dbReference>
<dbReference type="GO" id="GO:0019288">
    <property type="term" value="P:isopentenyl diphosphate biosynthetic process, methylerythritol 4-phosphate pathway"/>
    <property type="evidence" value="ECO:0007669"/>
    <property type="project" value="UniProtKB-UniRule"/>
</dbReference>
<dbReference type="GO" id="GO:0016114">
    <property type="term" value="P:terpenoid biosynthetic process"/>
    <property type="evidence" value="ECO:0007669"/>
    <property type="project" value="InterPro"/>
</dbReference>
<dbReference type="FunFam" id="3.20.20.20:FF:000001">
    <property type="entry name" value="4-hydroxy-3-methylbut-2-en-1-yl diphosphate synthase (flavodoxin)"/>
    <property type="match status" value="1"/>
</dbReference>
<dbReference type="FunFam" id="3.30.413.10:FF:000001">
    <property type="entry name" value="4-hydroxy-3-methylbut-2-en-1-yl diphosphate synthase (flavodoxin)"/>
    <property type="match status" value="1"/>
</dbReference>
<dbReference type="Gene3D" id="3.20.20.20">
    <property type="entry name" value="Dihydropteroate synthase-like"/>
    <property type="match status" value="1"/>
</dbReference>
<dbReference type="Gene3D" id="3.30.413.10">
    <property type="entry name" value="Sulfite Reductase Hemoprotein, domain 1"/>
    <property type="match status" value="1"/>
</dbReference>
<dbReference type="HAMAP" id="MF_00159">
    <property type="entry name" value="IspG"/>
    <property type="match status" value="1"/>
</dbReference>
<dbReference type="InterPro" id="IPR011005">
    <property type="entry name" value="Dihydropteroate_synth-like_sf"/>
</dbReference>
<dbReference type="InterPro" id="IPR016425">
    <property type="entry name" value="IspG_bac"/>
</dbReference>
<dbReference type="InterPro" id="IPR004588">
    <property type="entry name" value="IspG_bac-typ"/>
</dbReference>
<dbReference type="InterPro" id="IPR045854">
    <property type="entry name" value="NO2/SO3_Rdtase_4Fe4S_sf"/>
</dbReference>
<dbReference type="NCBIfam" id="TIGR00612">
    <property type="entry name" value="ispG_gcpE"/>
    <property type="match status" value="1"/>
</dbReference>
<dbReference type="NCBIfam" id="NF001540">
    <property type="entry name" value="PRK00366.1"/>
    <property type="match status" value="1"/>
</dbReference>
<dbReference type="PANTHER" id="PTHR30454">
    <property type="entry name" value="4-HYDROXY-3-METHYLBUT-2-EN-1-YL DIPHOSPHATE SYNTHASE"/>
    <property type="match status" value="1"/>
</dbReference>
<dbReference type="PANTHER" id="PTHR30454:SF0">
    <property type="entry name" value="4-HYDROXY-3-METHYLBUT-2-EN-1-YL DIPHOSPHATE SYNTHASE (FERREDOXIN), CHLOROPLASTIC"/>
    <property type="match status" value="1"/>
</dbReference>
<dbReference type="Pfam" id="PF04551">
    <property type="entry name" value="GcpE"/>
    <property type="match status" value="1"/>
</dbReference>
<dbReference type="PIRSF" id="PIRSF004640">
    <property type="entry name" value="IspG"/>
    <property type="match status" value="1"/>
</dbReference>
<dbReference type="SUPFAM" id="SSF51717">
    <property type="entry name" value="Dihydropteroate synthetase-like"/>
    <property type="match status" value="1"/>
</dbReference>
<dbReference type="SUPFAM" id="SSF56014">
    <property type="entry name" value="Nitrite and sulphite reductase 4Fe-4S domain-like"/>
    <property type="match status" value="1"/>
</dbReference>
<accession>Q4JV28</accession>
<feature type="chain" id="PRO_1000123441" description="4-hydroxy-3-methylbut-2-en-1-yl diphosphate synthase (flavodoxin)">
    <location>
        <begin position="1"/>
        <end position="386"/>
    </location>
</feature>
<feature type="binding site" evidence="1">
    <location>
        <position position="281"/>
    </location>
    <ligand>
        <name>[4Fe-4S] cluster</name>
        <dbReference type="ChEBI" id="CHEBI:49883"/>
    </ligand>
</feature>
<feature type="binding site" evidence="1">
    <location>
        <position position="284"/>
    </location>
    <ligand>
        <name>[4Fe-4S] cluster</name>
        <dbReference type="ChEBI" id="CHEBI:49883"/>
    </ligand>
</feature>
<feature type="binding site" evidence="1">
    <location>
        <position position="316"/>
    </location>
    <ligand>
        <name>[4Fe-4S] cluster</name>
        <dbReference type="ChEBI" id="CHEBI:49883"/>
    </ligand>
</feature>
<feature type="binding site" evidence="1">
    <location>
        <position position="323"/>
    </location>
    <ligand>
        <name>[4Fe-4S] cluster</name>
        <dbReference type="ChEBI" id="CHEBI:49883"/>
    </ligand>
</feature>
<comment type="function">
    <text evidence="1">Converts 2C-methyl-D-erythritol 2,4-cyclodiphosphate (ME-2,4cPP) into 1-hydroxy-2-methyl-2-(E)-butenyl 4-diphosphate.</text>
</comment>
<comment type="catalytic activity">
    <reaction evidence="1">
        <text>(2E)-4-hydroxy-3-methylbut-2-enyl diphosphate + oxidized [flavodoxin] + H2O + 2 H(+) = 2-C-methyl-D-erythritol 2,4-cyclic diphosphate + reduced [flavodoxin]</text>
        <dbReference type="Rhea" id="RHEA:43604"/>
        <dbReference type="Rhea" id="RHEA-COMP:10622"/>
        <dbReference type="Rhea" id="RHEA-COMP:10623"/>
        <dbReference type="ChEBI" id="CHEBI:15377"/>
        <dbReference type="ChEBI" id="CHEBI:15378"/>
        <dbReference type="ChEBI" id="CHEBI:57618"/>
        <dbReference type="ChEBI" id="CHEBI:58210"/>
        <dbReference type="ChEBI" id="CHEBI:58483"/>
        <dbReference type="ChEBI" id="CHEBI:128753"/>
        <dbReference type="EC" id="1.17.7.3"/>
    </reaction>
</comment>
<comment type="cofactor">
    <cofactor evidence="1">
        <name>[4Fe-4S] cluster</name>
        <dbReference type="ChEBI" id="CHEBI:49883"/>
    </cofactor>
    <text evidence="1">Binds 1 [4Fe-4S] cluster.</text>
</comment>
<comment type="pathway">
    <text evidence="1">Isoprenoid biosynthesis; isopentenyl diphosphate biosynthesis via DXP pathway; isopentenyl diphosphate from 1-deoxy-D-xylulose 5-phosphate: step 5/6.</text>
</comment>
<comment type="similarity">
    <text evidence="1">Belongs to the IspG family.</text>
</comment>